<evidence type="ECO:0000255" key="1">
    <source>
        <dbReference type="HAMAP-Rule" id="MF_00129"/>
    </source>
</evidence>
<feature type="chain" id="PRO_1000016545" description="tRNA uridine 5-carboxymethylaminomethyl modification enzyme MnmG">
    <location>
        <begin position="1"/>
        <end position="640"/>
    </location>
</feature>
<feature type="binding site" evidence="1">
    <location>
        <begin position="19"/>
        <end position="24"/>
    </location>
    <ligand>
        <name>FAD</name>
        <dbReference type="ChEBI" id="CHEBI:57692"/>
    </ligand>
</feature>
<feature type="binding site" evidence="1">
    <location>
        <begin position="280"/>
        <end position="294"/>
    </location>
    <ligand>
        <name>NAD(+)</name>
        <dbReference type="ChEBI" id="CHEBI:57540"/>
    </ligand>
</feature>
<dbReference type="EMBL" id="CP000117">
    <property type="protein sequence ID" value="ABA23146.1"/>
    <property type="molecule type" value="Genomic_DNA"/>
</dbReference>
<dbReference type="SMR" id="Q3M790"/>
<dbReference type="STRING" id="240292.Ava_3539"/>
<dbReference type="KEGG" id="ava:Ava_3539"/>
<dbReference type="eggNOG" id="COG0445">
    <property type="taxonomic scope" value="Bacteria"/>
</dbReference>
<dbReference type="HOGENOM" id="CLU_007831_2_2_3"/>
<dbReference type="Proteomes" id="UP000002533">
    <property type="component" value="Chromosome"/>
</dbReference>
<dbReference type="GO" id="GO:0005737">
    <property type="term" value="C:cytoplasm"/>
    <property type="evidence" value="ECO:0007669"/>
    <property type="project" value="UniProtKB-SubCell"/>
</dbReference>
<dbReference type="GO" id="GO:0050660">
    <property type="term" value="F:flavin adenine dinucleotide binding"/>
    <property type="evidence" value="ECO:0007669"/>
    <property type="project" value="UniProtKB-UniRule"/>
</dbReference>
<dbReference type="GO" id="GO:0030488">
    <property type="term" value="P:tRNA methylation"/>
    <property type="evidence" value="ECO:0007669"/>
    <property type="project" value="TreeGrafter"/>
</dbReference>
<dbReference type="GO" id="GO:0002098">
    <property type="term" value="P:tRNA wobble uridine modification"/>
    <property type="evidence" value="ECO:0007669"/>
    <property type="project" value="InterPro"/>
</dbReference>
<dbReference type="FunFam" id="1.10.10.1800:FF:000001">
    <property type="entry name" value="tRNA uridine 5-carboxymethylaminomethyl modification enzyme MnmG"/>
    <property type="match status" value="1"/>
</dbReference>
<dbReference type="FunFam" id="1.10.150.570:FF:000001">
    <property type="entry name" value="tRNA uridine 5-carboxymethylaminomethyl modification enzyme MnmG"/>
    <property type="match status" value="1"/>
</dbReference>
<dbReference type="FunFam" id="3.50.50.60:FF:000094">
    <property type="entry name" value="tRNA uridine 5-carboxymethylaminomethyl modification enzyme MnmG"/>
    <property type="match status" value="1"/>
</dbReference>
<dbReference type="FunFam" id="3.50.50.60:FF:000119">
    <property type="entry name" value="tRNA uridine 5-carboxymethylaminomethyl modification enzyme MnmG"/>
    <property type="match status" value="1"/>
</dbReference>
<dbReference type="Gene3D" id="3.50.50.60">
    <property type="entry name" value="FAD/NAD(P)-binding domain"/>
    <property type="match status" value="2"/>
</dbReference>
<dbReference type="Gene3D" id="1.10.150.570">
    <property type="entry name" value="GidA associated domain, C-terminal subdomain"/>
    <property type="match status" value="1"/>
</dbReference>
<dbReference type="Gene3D" id="1.10.10.1800">
    <property type="entry name" value="tRNA uridine 5-carboxymethylaminomethyl modification enzyme MnmG/GidA"/>
    <property type="match status" value="1"/>
</dbReference>
<dbReference type="HAMAP" id="MF_00129">
    <property type="entry name" value="MnmG_GidA"/>
    <property type="match status" value="1"/>
</dbReference>
<dbReference type="InterPro" id="IPR036188">
    <property type="entry name" value="FAD/NAD-bd_sf"/>
</dbReference>
<dbReference type="InterPro" id="IPR049312">
    <property type="entry name" value="GIDA_C_N"/>
</dbReference>
<dbReference type="InterPro" id="IPR004416">
    <property type="entry name" value="MnmG"/>
</dbReference>
<dbReference type="InterPro" id="IPR002218">
    <property type="entry name" value="MnmG-rel"/>
</dbReference>
<dbReference type="InterPro" id="IPR020595">
    <property type="entry name" value="MnmG-rel_CS"/>
</dbReference>
<dbReference type="InterPro" id="IPR026904">
    <property type="entry name" value="MnmG_C"/>
</dbReference>
<dbReference type="InterPro" id="IPR047001">
    <property type="entry name" value="MnmG_C_subdom"/>
</dbReference>
<dbReference type="InterPro" id="IPR044920">
    <property type="entry name" value="MnmG_C_subdom_sf"/>
</dbReference>
<dbReference type="InterPro" id="IPR040131">
    <property type="entry name" value="MnmG_N"/>
</dbReference>
<dbReference type="NCBIfam" id="TIGR00136">
    <property type="entry name" value="mnmG_gidA"/>
    <property type="match status" value="1"/>
</dbReference>
<dbReference type="PANTHER" id="PTHR11806">
    <property type="entry name" value="GLUCOSE INHIBITED DIVISION PROTEIN A"/>
    <property type="match status" value="1"/>
</dbReference>
<dbReference type="PANTHER" id="PTHR11806:SF0">
    <property type="entry name" value="PROTEIN MTO1 HOMOLOG, MITOCHONDRIAL"/>
    <property type="match status" value="1"/>
</dbReference>
<dbReference type="Pfam" id="PF01134">
    <property type="entry name" value="GIDA"/>
    <property type="match status" value="1"/>
</dbReference>
<dbReference type="Pfam" id="PF21680">
    <property type="entry name" value="GIDA_C_1st"/>
    <property type="match status" value="1"/>
</dbReference>
<dbReference type="Pfam" id="PF13932">
    <property type="entry name" value="SAM_GIDA_C"/>
    <property type="match status" value="1"/>
</dbReference>
<dbReference type="SMART" id="SM01228">
    <property type="entry name" value="GIDA_assoc_3"/>
    <property type="match status" value="1"/>
</dbReference>
<dbReference type="SUPFAM" id="SSF51905">
    <property type="entry name" value="FAD/NAD(P)-binding domain"/>
    <property type="match status" value="1"/>
</dbReference>
<dbReference type="PROSITE" id="PS01280">
    <property type="entry name" value="GIDA_1"/>
    <property type="match status" value="1"/>
</dbReference>
<dbReference type="PROSITE" id="PS01281">
    <property type="entry name" value="GIDA_2"/>
    <property type="match status" value="1"/>
</dbReference>
<comment type="function">
    <text evidence="1">NAD-binding protein involved in the addition of a carboxymethylaminomethyl (cmnm) group at the wobble position (U34) of certain tRNAs, forming tRNA-cmnm(5)s(2)U34.</text>
</comment>
<comment type="cofactor">
    <cofactor evidence="1">
        <name>FAD</name>
        <dbReference type="ChEBI" id="CHEBI:57692"/>
    </cofactor>
</comment>
<comment type="subunit">
    <text evidence="1">Homodimer. Heterotetramer of two MnmE and two MnmG subunits.</text>
</comment>
<comment type="subcellular location">
    <subcellularLocation>
        <location evidence="1">Cytoplasm</location>
    </subcellularLocation>
</comment>
<comment type="similarity">
    <text evidence="1">Belongs to the MnmG family.</text>
</comment>
<sequence length="640" mass="71590">MTMHNSVEFQDAFDVIVVGAGHSGCEAALATARLGCRTLLLTLNLDKIAWQPCNPAVGGPAKSQLTHEVDALGGEIGKMADRTYLQKRILNSSRGPAVWALRAQTDKREYAAIMKNIVENQENLSIRESMVTDLVLGANDEVIGVETYFGVAFQCKAVILTTGTFLGGKIWVGNKSMPAGRAGEFAAEGLTETLNRLGFETGRLKTGTPARVDKRSVDYSKMQLQPGDEEVRWFSFDPDVWVEREQLPCHMTRTTPETHRLIRENLHLSPVYGGWVEAKGPRYCPSIEDKIVRFVDKESHQIFIEPEGRDIPELYIQGFSTGLPENLQLQMLRSLPGLENCVMLRPAYAVEYDYLPATQCYPTLMTKKVAGLFCAGQVNGTTGYEEAAAQGIVAGINAARFVRDQEMIVFPREQSYLGTLVDDLCTKDLREPYRMLTSRSEYRLLLRSDNSDQRLTPLGREIGLIDDRRWQLFTRKQEQITGEKERLYATRVKENDEVGKAIASNTQQAIKGSITLADLLRRPGFHYVDLDRYGLGNPELTPAEREGAEIDIKYSGYLARQQSQIEQIARQAQRQLPRDLDYTTVETLSKEAREKLNKVKPMTIGQAARIGGVNPADINALLIYLELRQTKHQTGLAALP</sequence>
<reference key="1">
    <citation type="journal article" date="2014" name="Stand. Genomic Sci.">
        <title>Complete genome sequence of Anabaena variabilis ATCC 29413.</title>
        <authorList>
            <person name="Thiel T."/>
            <person name="Pratte B.S."/>
            <person name="Zhong J."/>
            <person name="Goodwin L."/>
            <person name="Copeland A."/>
            <person name="Lucas S."/>
            <person name="Han C."/>
            <person name="Pitluck S."/>
            <person name="Land M.L."/>
            <person name="Kyrpides N.C."/>
            <person name="Woyke T."/>
        </authorList>
    </citation>
    <scope>NUCLEOTIDE SEQUENCE [LARGE SCALE GENOMIC DNA]</scope>
    <source>
        <strain>ATCC 29413 / PCC 7937</strain>
    </source>
</reference>
<proteinExistence type="inferred from homology"/>
<accession>Q3M790</accession>
<name>MNMG_TRIV2</name>
<gene>
    <name evidence="1" type="primary">mnmG</name>
    <name evidence="1" type="synonym">gidA</name>
    <name type="ordered locus">Ava_3539</name>
</gene>
<protein>
    <recommendedName>
        <fullName evidence="1">tRNA uridine 5-carboxymethylaminomethyl modification enzyme MnmG</fullName>
    </recommendedName>
    <alternativeName>
        <fullName evidence="1">Glucose-inhibited division protein A</fullName>
    </alternativeName>
</protein>
<organism>
    <name type="scientific">Trichormus variabilis (strain ATCC 29413 / PCC 7937)</name>
    <name type="common">Anabaena variabilis</name>
    <dbReference type="NCBI Taxonomy" id="240292"/>
    <lineage>
        <taxon>Bacteria</taxon>
        <taxon>Bacillati</taxon>
        <taxon>Cyanobacteriota</taxon>
        <taxon>Cyanophyceae</taxon>
        <taxon>Nostocales</taxon>
        <taxon>Nostocaceae</taxon>
        <taxon>Trichormus</taxon>
    </lineage>
</organism>
<keyword id="KW-0963">Cytoplasm</keyword>
<keyword id="KW-0274">FAD</keyword>
<keyword id="KW-0285">Flavoprotein</keyword>
<keyword id="KW-0520">NAD</keyword>
<keyword id="KW-0819">tRNA processing</keyword>